<protein>
    <recommendedName>
        <fullName evidence="1">Small ribosomal subunit protein bS21</fullName>
    </recommendedName>
    <alternativeName>
        <fullName evidence="3">30S ribosomal protein S21</fullName>
    </alternativeName>
</protein>
<feature type="chain" id="PRO_1000205372" description="Small ribosomal subunit protein bS21">
    <location>
        <begin position="1"/>
        <end position="71"/>
    </location>
</feature>
<feature type="region of interest" description="Disordered" evidence="2">
    <location>
        <begin position="38"/>
        <end position="71"/>
    </location>
</feature>
<feature type="compositionally biased region" description="Basic residues" evidence="2">
    <location>
        <begin position="46"/>
        <end position="59"/>
    </location>
</feature>
<feature type="compositionally biased region" description="Basic and acidic residues" evidence="2">
    <location>
        <begin position="60"/>
        <end position="71"/>
    </location>
</feature>
<comment type="similarity">
    <text evidence="1">Belongs to the bacterial ribosomal protein bS21 family.</text>
</comment>
<dbReference type="EMBL" id="CP001277">
    <property type="protein sequence ID" value="ACQ67384.1"/>
    <property type="molecule type" value="Genomic_DNA"/>
</dbReference>
<dbReference type="RefSeq" id="WP_015873205.1">
    <property type="nucleotide sequence ID" value="NC_012751.1"/>
</dbReference>
<dbReference type="SMR" id="C4K491"/>
<dbReference type="STRING" id="572265.HDEF_0643"/>
<dbReference type="GeneID" id="66260512"/>
<dbReference type="KEGG" id="hde:HDEF_0643"/>
<dbReference type="eggNOG" id="COG0828">
    <property type="taxonomic scope" value="Bacteria"/>
</dbReference>
<dbReference type="HOGENOM" id="CLU_159258_1_0_6"/>
<dbReference type="Proteomes" id="UP000002334">
    <property type="component" value="Chromosome"/>
</dbReference>
<dbReference type="GO" id="GO:1990904">
    <property type="term" value="C:ribonucleoprotein complex"/>
    <property type="evidence" value="ECO:0007669"/>
    <property type="project" value="UniProtKB-KW"/>
</dbReference>
<dbReference type="GO" id="GO:0005840">
    <property type="term" value="C:ribosome"/>
    <property type="evidence" value="ECO:0007669"/>
    <property type="project" value="UniProtKB-KW"/>
</dbReference>
<dbReference type="GO" id="GO:0003735">
    <property type="term" value="F:structural constituent of ribosome"/>
    <property type="evidence" value="ECO:0007669"/>
    <property type="project" value="InterPro"/>
</dbReference>
<dbReference type="GO" id="GO:0006412">
    <property type="term" value="P:translation"/>
    <property type="evidence" value="ECO:0007669"/>
    <property type="project" value="UniProtKB-UniRule"/>
</dbReference>
<dbReference type="Gene3D" id="1.20.5.1150">
    <property type="entry name" value="Ribosomal protein S8"/>
    <property type="match status" value="1"/>
</dbReference>
<dbReference type="HAMAP" id="MF_00358">
    <property type="entry name" value="Ribosomal_bS21"/>
    <property type="match status" value="1"/>
</dbReference>
<dbReference type="InterPro" id="IPR001911">
    <property type="entry name" value="Ribosomal_bS21"/>
</dbReference>
<dbReference type="InterPro" id="IPR018278">
    <property type="entry name" value="Ribosomal_bS21_CS"/>
</dbReference>
<dbReference type="InterPro" id="IPR038380">
    <property type="entry name" value="Ribosomal_bS21_sf"/>
</dbReference>
<dbReference type="NCBIfam" id="TIGR00030">
    <property type="entry name" value="S21p"/>
    <property type="match status" value="1"/>
</dbReference>
<dbReference type="PANTHER" id="PTHR21109">
    <property type="entry name" value="MITOCHONDRIAL 28S RIBOSOMAL PROTEIN S21"/>
    <property type="match status" value="1"/>
</dbReference>
<dbReference type="PANTHER" id="PTHR21109:SF22">
    <property type="entry name" value="SMALL RIBOSOMAL SUBUNIT PROTEIN BS21"/>
    <property type="match status" value="1"/>
</dbReference>
<dbReference type="Pfam" id="PF01165">
    <property type="entry name" value="Ribosomal_S21"/>
    <property type="match status" value="1"/>
</dbReference>
<dbReference type="PRINTS" id="PR00976">
    <property type="entry name" value="RIBOSOMALS21"/>
</dbReference>
<dbReference type="PROSITE" id="PS01181">
    <property type="entry name" value="RIBOSOMAL_S21"/>
    <property type="match status" value="1"/>
</dbReference>
<keyword id="KW-0687">Ribonucleoprotein</keyword>
<keyword id="KW-0689">Ribosomal protein</keyword>
<sequence>MPIIKVRENEPFDVALRRFKRSCEKAGILAEVRRRESYEKPTTERKRARASAIKRHAKKLARENARRTRLY</sequence>
<gene>
    <name evidence="1" type="primary">rpsU</name>
    <name type="ordered locus">HDEF_0643</name>
</gene>
<accession>C4K491</accession>
<name>RS21_HAMD5</name>
<evidence type="ECO:0000255" key="1">
    <source>
        <dbReference type="HAMAP-Rule" id="MF_00358"/>
    </source>
</evidence>
<evidence type="ECO:0000256" key="2">
    <source>
        <dbReference type="SAM" id="MobiDB-lite"/>
    </source>
</evidence>
<evidence type="ECO:0000305" key="3"/>
<proteinExistence type="inferred from homology"/>
<reference key="1">
    <citation type="journal article" date="2009" name="Proc. Natl. Acad. Sci. U.S.A.">
        <title>Hamiltonella defensa, genome evolution of protective bacterial endosymbiont from pathogenic ancestors.</title>
        <authorList>
            <person name="Degnan P.H."/>
            <person name="Yu Y."/>
            <person name="Sisneros N."/>
            <person name="Wing R.A."/>
            <person name="Moran N.A."/>
        </authorList>
    </citation>
    <scope>NUCLEOTIDE SEQUENCE [LARGE SCALE GENOMIC DNA]</scope>
    <source>
        <strain>5AT</strain>
    </source>
</reference>
<organism>
    <name type="scientific">Hamiltonella defensa subsp. Acyrthosiphon pisum (strain 5AT)</name>
    <dbReference type="NCBI Taxonomy" id="572265"/>
    <lineage>
        <taxon>Bacteria</taxon>
        <taxon>Pseudomonadati</taxon>
        <taxon>Pseudomonadota</taxon>
        <taxon>Gammaproteobacteria</taxon>
        <taxon>Enterobacterales</taxon>
        <taxon>Enterobacteriaceae</taxon>
        <taxon>aphid secondary symbionts</taxon>
        <taxon>Candidatus Hamiltonella</taxon>
    </lineage>
</organism>